<organism>
    <name type="scientific">Emericella nidulans (strain FGSC A4 / ATCC 38163 / CBS 112.46 / NRRL 194 / M139)</name>
    <name type="common">Aspergillus nidulans</name>
    <dbReference type="NCBI Taxonomy" id="227321"/>
    <lineage>
        <taxon>Eukaryota</taxon>
        <taxon>Fungi</taxon>
        <taxon>Dikarya</taxon>
        <taxon>Ascomycota</taxon>
        <taxon>Pezizomycotina</taxon>
        <taxon>Eurotiomycetes</taxon>
        <taxon>Eurotiomycetidae</taxon>
        <taxon>Eurotiales</taxon>
        <taxon>Aspergillaceae</taxon>
        <taxon>Aspergillus</taxon>
        <taxon>Aspergillus subgen. Nidulantes</taxon>
    </lineage>
</organism>
<proteinExistence type="inferred from homology"/>
<keyword id="KW-0067">ATP-binding</keyword>
<keyword id="KW-0963">Cytoplasm</keyword>
<keyword id="KW-0418">Kinase</keyword>
<keyword id="KW-0496">Mitochondrion</keyword>
<keyword id="KW-0547">Nucleotide-binding</keyword>
<keyword id="KW-1185">Reference proteome</keyword>
<keyword id="KW-0808">Transferase</keyword>
<protein>
    <recommendedName>
        <fullName evidence="1">Adenylate kinase</fullName>
        <ecNumber evidence="1">2.7.4.3</ecNumber>
    </recommendedName>
    <alternativeName>
        <fullName evidence="1">ATP-AMP transphosphorylase</fullName>
    </alternativeName>
    <alternativeName>
        <fullName evidence="1">ATP:AMP phosphotransferase</fullName>
    </alternativeName>
    <alternativeName>
        <fullName evidence="1">Adenylate kinase cytosolic and mitochondrial</fullName>
    </alternativeName>
    <alternativeName>
        <fullName evidence="1">Adenylate monophosphate kinase</fullName>
    </alternativeName>
</protein>
<dbReference type="EC" id="2.7.4.3" evidence="1"/>
<dbReference type="EMBL" id="AACD01000088">
    <property type="protein sequence ID" value="EAA62303.1"/>
    <property type="molecule type" value="Genomic_DNA"/>
</dbReference>
<dbReference type="EMBL" id="BN001305">
    <property type="protein sequence ID" value="CBF80901.1"/>
    <property type="molecule type" value="Genomic_DNA"/>
</dbReference>
<dbReference type="RefSeq" id="XP_662726.1">
    <property type="nucleotide sequence ID" value="XM_657634.1"/>
</dbReference>
<dbReference type="SMR" id="Q5B2V8"/>
<dbReference type="FunCoup" id="Q5B2V8">
    <property type="interactions" value="821"/>
</dbReference>
<dbReference type="STRING" id="227321.Q5B2V8"/>
<dbReference type="EnsemblFungi" id="CBF80901">
    <property type="protein sequence ID" value="CBF80901"/>
    <property type="gene ID" value="ANIA_05122"/>
</dbReference>
<dbReference type="KEGG" id="ani:ANIA_05122"/>
<dbReference type="VEuPathDB" id="FungiDB:AN5122"/>
<dbReference type="eggNOG" id="KOG3078">
    <property type="taxonomic scope" value="Eukaryota"/>
</dbReference>
<dbReference type="HOGENOM" id="CLU_032354_1_0_1"/>
<dbReference type="InParanoid" id="Q5B2V8"/>
<dbReference type="OMA" id="VYHEQTA"/>
<dbReference type="OrthoDB" id="439792at2759"/>
<dbReference type="Proteomes" id="UP000000560">
    <property type="component" value="Chromosome V"/>
</dbReference>
<dbReference type="GO" id="GO:0005737">
    <property type="term" value="C:cytoplasm"/>
    <property type="evidence" value="ECO:0000318"/>
    <property type="project" value="GO_Central"/>
</dbReference>
<dbReference type="GO" id="GO:0005829">
    <property type="term" value="C:cytosol"/>
    <property type="evidence" value="ECO:0007669"/>
    <property type="project" value="EnsemblFungi"/>
</dbReference>
<dbReference type="GO" id="GO:0005758">
    <property type="term" value="C:mitochondrial intermembrane space"/>
    <property type="evidence" value="ECO:0007669"/>
    <property type="project" value="UniProtKB-SubCell"/>
</dbReference>
<dbReference type="GO" id="GO:0005739">
    <property type="term" value="C:mitochondrion"/>
    <property type="evidence" value="ECO:0000318"/>
    <property type="project" value="GO_Central"/>
</dbReference>
<dbReference type="GO" id="GO:0004017">
    <property type="term" value="F:adenylate kinase activity"/>
    <property type="evidence" value="ECO:0000314"/>
    <property type="project" value="AspGD"/>
</dbReference>
<dbReference type="GO" id="GO:0016208">
    <property type="term" value="F:AMP binding"/>
    <property type="evidence" value="ECO:0007669"/>
    <property type="project" value="EnsemblFungi"/>
</dbReference>
<dbReference type="GO" id="GO:0005524">
    <property type="term" value="F:ATP binding"/>
    <property type="evidence" value="ECO:0007669"/>
    <property type="project" value="UniProtKB-KW"/>
</dbReference>
<dbReference type="GO" id="GO:0003688">
    <property type="term" value="F:DNA replication origin binding"/>
    <property type="evidence" value="ECO:0007669"/>
    <property type="project" value="EnsemblFungi"/>
</dbReference>
<dbReference type="GO" id="GO:0006172">
    <property type="term" value="P:ADP biosynthetic process"/>
    <property type="evidence" value="ECO:0000318"/>
    <property type="project" value="GO_Central"/>
</dbReference>
<dbReference type="GO" id="GO:0046033">
    <property type="term" value="P:AMP metabolic process"/>
    <property type="evidence" value="ECO:0007669"/>
    <property type="project" value="UniProtKB-UniRule"/>
</dbReference>
<dbReference type="GO" id="GO:0046034">
    <property type="term" value="P:ATP metabolic process"/>
    <property type="evidence" value="ECO:0007669"/>
    <property type="project" value="UniProtKB-UniRule"/>
</dbReference>
<dbReference type="GO" id="GO:0006270">
    <property type="term" value="P:DNA replication initiation"/>
    <property type="evidence" value="ECO:0007669"/>
    <property type="project" value="EnsemblFungi"/>
</dbReference>
<dbReference type="GO" id="GO:0036388">
    <property type="term" value="P:pre-replicative complex assembly"/>
    <property type="evidence" value="ECO:0007669"/>
    <property type="project" value="EnsemblFungi"/>
</dbReference>
<dbReference type="CDD" id="cd01428">
    <property type="entry name" value="ADK"/>
    <property type="match status" value="1"/>
</dbReference>
<dbReference type="FunFam" id="3.40.50.300:FF:000106">
    <property type="entry name" value="Adenylate kinase mitochondrial"/>
    <property type="match status" value="1"/>
</dbReference>
<dbReference type="Gene3D" id="3.40.50.300">
    <property type="entry name" value="P-loop containing nucleotide triphosphate hydrolases"/>
    <property type="match status" value="1"/>
</dbReference>
<dbReference type="HAMAP" id="MF_00235">
    <property type="entry name" value="Adenylate_kinase_Adk"/>
    <property type="match status" value="1"/>
</dbReference>
<dbReference type="HAMAP" id="MF_03168">
    <property type="entry name" value="Adenylate_kinase_AK2"/>
    <property type="match status" value="1"/>
</dbReference>
<dbReference type="InterPro" id="IPR006259">
    <property type="entry name" value="Adenyl_kin_sub"/>
</dbReference>
<dbReference type="InterPro" id="IPR000850">
    <property type="entry name" value="Adenylat/UMP-CMP_kin"/>
</dbReference>
<dbReference type="InterPro" id="IPR033690">
    <property type="entry name" value="Adenylat_kinase_CS"/>
</dbReference>
<dbReference type="InterPro" id="IPR007862">
    <property type="entry name" value="Adenylate_kinase_lid-dom"/>
</dbReference>
<dbReference type="InterPro" id="IPR028587">
    <property type="entry name" value="AK2"/>
</dbReference>
<dbReference type="InterPro" id="IPR027417">
    <property type="entry name" value="P-loop_NTPase"/>
</dbReference>
<dbReference type="NCBIfam" id="TIGR01351">
    <property type="entry name" value="adk"/>
    <property type="match status" value="1"/>
</dbReference>
<dbReference type="NCBIfam" id="NF001380">
    <property type="entry name" value="PRK00279.1-2"/>
    <property type="match status" value="1"/>
</dbReference>
<dbReference type="NCBIfam" id="NF001381">
    <property type="entry name" value="PRK00279.1-3"/>
    <property type="match status" value="1"/>
</dbReference>
<dbReference type="NCBIfam" id="NF011100">
    <property type="entry name" value="PRK14527.1"/>
    <property type="match status" value="1"/>
</dbReference>
<dbReference type="PANTHER" id="PTHR23359">
    <property type="entry name" value="NUCLEOTIDE KINASE"/>
    <property type="match status" value="1"/>
</dbReference>
<dbReference type="Pfam" id="PF00406">
    <property type="entry name" value="ADK"/>
    <property type="match status" value="1"/>
</dbReference>
<dbReference type="Pfam" id="PF05191">
    <property type="entry name" value="ADK_lid"/>
    <property type="match status" value="1"/>
</dbReference>
<dbReference type="PRINTS" id="PR00094">
    <property type="entry name" value="ADENYLTKNASE"/>
</dbReference>
<dbReference type="SUPFAM" id="SSF52540">
    <property type="entry name" value="P-loop containing nucleoside triphosphate hydrolases"/>
    <property type="match status" value="1"/>
</dbReference>
<dbReference type="PROSITE" id="PS00113">
    <property type="entry name" value="ADENYLATE_KINASE"/>
    <property type="match status" value="1"/>
</dbReference>
<sequence length="259" mass="28597">MAPITDDVVAGLKSTIGKLEARIEDLESRLGGEPKPKSIAEHMRIILMGPPGAGKGTQAPKIKEKYCVCHLATGDMLRSQVAKKTDLGREAKKIMDQGGLVSDEIMVNMIKSELENNAECKNGFILDGFPRTVAQAERLDEMLVARNQKLQHAIELKIDDALLVARITGRLVHPASGRSYHKIFNPPKEAMKDDITGEPLVQRSDDNAEALKKRLVTYHAQTAPVCDYYKKTGIWRGIDASQEPGQVWKSLLGVFNNKN</sequence>
<feature type="chain" id="PRO_0000365674" description="Adenylate kinase">
    <location>
        <begin position="1"/>
        <end position="259"/>
    </location>
</feature>
<feature type="region of interest" description="NMP" evidence="1">
    <location>
        <begin position="72"/>
        <end position="101"/>
    </location>
</feature>
<feature type="region of interest" description="LID" evidence="1">
    <location>
        <begin position="169"/>
        <end position="206"/>
    </location>
</feature>
<feature type="binding site" evidence="1">
    <location>
        <begin position="52"/>
        <end position="57"/>
    </location>
    <ligand>
        <name>ATP</name>
        <dbReference type="ChEBI" id="CHEBI:30616"/>
    </ligand>
</feature>
<feature type="binding site" evidence="1">
    <location>
        <position position="73"/>
    </location>
    <ligand>
        <name>AMP</name>
        <dbReference type="ChEBI" id="CHEBI:456215"/>
    </ligand>
</feature>
<feature type="binding site" evidence="1">
    <location>
        <position position="78"/>
    </location>
    <ligand>
        <name>AMP</name>
        <dbReference type="ChEBI" id="CHEBI:456215"/>
    </ligand>
</feature>
<feature type="binding site" evidence="1">
    <location>
        <begin position="99"/>
        <end position="101"/>
    </location>
    <ligand>
        <name>AMP</name>
        <dbReference type="ChEBI" id="CHEBI:456215"/>
    </ligand>
</feature>
<feature type="binding site" evidence="1">
    <location>
        <begin position="128"/>
        <end position="131"/>
    </location>
    <ligand>
        <name>AMP</name>
        <dbReference type="ChEBI" id="CHEBI:456215"/>
    </ligand>
</feature>
<feature type="binding site" evidence="1">
    <location>
        <position position="135"/>
    </location>
    <ligand>
        <name>AMP</name>
        <dbReference type="ChEBI" id="CHEBI:456215"/>
    </ligand>
</feature>
<feature type="binding site" evidence="1">
    <location>
        <position position="170"/>
    </location>
    <ligand>
        <name>ATP</name>
        <dbReference type="ChEBI" id="CHEBI:30616"/>
    </ligand>
</feature>
<feature type="binding site" evidence="1">
    <location>
        <begin position="179"/>
        <end position="180"/>
    </location>
    <ligand>
        <name>ATP</name>
        <dbReference type="ChEBI" id="CHEBI:30616"/>
    </ligand>
</feature>
<feature type="binding site" evidence="1">
    <location>
        <position position="203"/>
    </location>
    <ligand>
        <name>AMP</name>
        <dbReference type="ChEBI" id="CHEBI:456215"/>
    </ligand>
</feature>
<feature type="binding site" evidence="1">
    <location>
        <position position="214"/>
    </location>
    <ligand>
        <name>AMP</name>
        <dbReference type="ChEBI" id="CHEBI:456215"/>
    </ligand>
</feature>
<feature type="binding site" evidence="1">
    <location>
        <position position="242"/>
    </location>
    <ligand>
        <name>ATP</name>
        <dbReference type="ChEBI" id="CHEBI:30616"/>
    </ligand>
</feature>
<comment type="function">
    <text evidence="1 2">Catalyzes the reversible transfer of the terminal phosphate group between ATP and AMP. Plays an important role in cellular energy homeostasis and in adenine nucleotide metabolism. Adenylate kinase activity is critical for regulation of the phosphate utilization and the AMP de novo biosynthesis pathways.</text>
</comment>
<comment type="catalytic activity">
    <reaction evidence="1">
        <text>AMP + ATP = 2 ADP</text>
        <dbReference type="Rhea" id="RHEA:12973"/>
        <dbReference type="ChEBI" id="CHEBI:30616"/>
        <dbReference type="ChEBI" id="CHEBI:456215"/>
        <dbReference type="ChEBI" id="CHEBI:456216"/>
        <dbReference type="EC" id="2.7.4.3"/>
    </reaction>
</comment>
<comment type="subunit">
    <text evidence="1">Monomer.</text>
</comment>
<comment type="subcellular location">
    <subcellularLocation>
        <location evidence="2">Cytoplasm</location>
    </subcellularLocation>
    <subcellularLocation>
        <location evidence="1 2">Mitochondrion intermembrane space</location>
    </subcellularLocation>
</comment>
<comment type="domain">
    <text evidence="1">Consists of three domains, a large central CORE domain and two small peripheral domains, NMPbind and LID, which undergo movements during catalysis. The LID domain closes over the site of phosphoryl transfer upon ATP binding. Assembling and dissambling the active center during each catalytic cycle provides an effective means to prevent ATP hydrolysis.</text>
</comment>
<comment type="similarity">
    <text evidence="1">Belongs to the adenylate kinase family. AK2 subfamily.</text>
</comment>
<evidence type="ECO:0000255" key="1">
    <source>
        <dbReference type="HAMAP-Rule" id="MF_03168"/>
    </source>
</evidence>
<evidence type="ECO:0000269" key="2">
    <source>
    </source>
</evidence>
<accession>Q5B2V8</accession>
<accession>C8VEY4</accession>
<reference key="1">
    <citation type="journal article" date="2005" name="Nature">
        <title>Sequencing of Aspergillus nidulans and comparative analysis with A. fumigatus and A. oryzae.</title>
        <authorList>
            <person name="Galagan J.E."/>
            <person name="Calvo S.E."/>
            <person name="Cuomo C."/>
            <person name="Ma L.-J."/>
            <person name="Wortman J.R."/>
            <person name="Batzoglou S."/>
            <person name="Lee S.-I."/>
            <person name="Bastuerkmen M."/>
            <person name="Spevak C.C."/>
            <person name="Clutterbuck J."/>
            <person name="Kapitonov V."/>
            <person name="Jurka J."/>
            <person name="Scazzocchio C."/>
            <person name="Farman M.L."/>
            <person name="Butler J."/>
            <person name="Purcell S."/>
            <person name="Harris S."/>
            <person name="Braus G.H."/>
            <person name="Draht O."/>
            <person name="Busch S."/>
            <person name="D'Enfert C."/>
            <person name="Bouchier C."/>
            <person name="Goldman G.H."/>
            <person name="Bell-Pedersen D."/>
            <person name="Griffiths-Jones S."/>
            <person name="Doonan J.H."/>
            <person name="Yu J."/>
            <person name="Vienken K."/>
            <person name="Pain A."/>
            <person name="Freitag M."/>
            <person name="Selker E.U."/>
            <person name="Archer D.B."/>
            <person name="Penalva M.A."/>
            <person name="Oakley B.R."/>
            <person name="Momany M."/>
            <person name="Tanaka T."/>
            <person name="Kumagai T."/>
            <person name="Asai K."/>
            <person name="Machida M."/>
            <person name="Nierman W.C."/>
            <person name="Denning D.W."/>
            <person name="Caddick M.X."/>
            <person name="Hynes M."/>
            <person name="Paoletti M."/>
            <person name="Fischer R."/>
            <person name="Miller B.L."/>
            <person name="Dyer P.S."/>
            <person name="Sachs M.S."/>
            <person name="Osmani S.A."/>
            <person name="Birren B.W."/>
        </authorList>
    </citation>
    <scope>NUCLEOTIDE SEQUENCE [LARGE SCALE GENOMIC DNA]</scope>
    <source>
        <strain>FGSC A4 / ATCC 38163 / CBS 112.46 / NRRL 194 / M139</strain>
    </source>
</reference>
<reference key="2">
    <citation type="journal article" date="2009" name="Fungal Genet. Biol.">
        <title>The 2008 update of the Aspergillus nidulans genome annotation: a community effort.</title>
        <authorList>
            <person name="Wortman J.R."/>
            <person name="Gilsenan J.M."/>
            <person name="Joardar V."/>
            <person name="Deegan J."/>
            <person name="Clutterbuck J."/>
            <person name="Andersen M.R."/>
            <person name="Archer D."/>
            <person name="Bencina M."/>
            <person name="Braus G."/>
            <person name="Coutinho P."/>
            <person name="von Dohren H."/>
            <person name="Doonan J."/>
            <person name="Driessen A.J."/>
            <person name="Durek P."/>
            <person name="Espeso E."/>
            <person name="Fekete E."/>
            <person name="Flipphi M."/>
            <person name="Estrada C.G."/>
            <person name="Geysens S."/>
            <person name="Goldman G."/>
            <person name="de Groot P.W."/>
            <person name="Hansen K."/>
            <person name="Harris S.D."/>
            <person name="Heinekamp T."/>
            <person name="Helmstaedt K."/>
            <person name="Henrissat B."/>
            <person name="Hofmann G."/>
            <person name="Homan T."/>
            <person name="Horio T."/>
            <person name="Horiuchi H."/>
            <person name="James S."/>
            <person name="Jones M."/>
            <person name="Karaffa L."/>
            <person name="Karanyi Z."/>
            <person name="Kato M."/>
            <person name="Keller N."/>
            <person name="Kelly D.E."/>
            <person name="Kiel J.A."/>
            <person name="Kim J.M."/>
            <person name="van der Klei I.J."/>
            <person name="Klis F.M."/>
            <person name="Kovalchuk A."/>
            <person name="Krasevec N."/>
            <person name="Kubicek C.P."/>
            <person name="Liu B."/>
            <person name="Maccabe A."/>
            <person name="Meyer V."/>
            <person name="Mirabito P."/>
            <person name="Miskei M."/>
            <person name="Mos M."/>
            <person name="Mullins J."/>
            <person name="Nelson D.R."/>
            <person name="Nielsen J."/>
            <person name="Oakley B.R."/>
            <person name="Osmani S.A."/>
            <person name="Pakula T."/>
            <person name="Paszewski A."/>
            <person name="Paulsen I."/>
            <person name="Pilsyk S."/>
            <person name="Pocsi I."/>
            <person name="Punt P.J."/>
            <person name="Ram A.F."/>
            <person name="Ren Q."/>
            <person name="Robellet X."/>
            <person name="Robson G."/>
            <person name="Seiboth B."/>
            <person name="van Solingen P."/>
            <person name="Specht T."/>
            <person name="Sun J."/>
            <person name="Taheri-Talesh N."/>
            <person name="Takeshita N."/>
            <person name="Ussery D."/>
            <person name="vanKuyk P.A."/>
            <person name="Visser H."/>
            <person name="van de Vondervoort P.J."/>
            <person name="de Vries R.P."/>
            <person name="Walton J."/>
            <person name="Xiang X."/>
            <person name="Xiong Y."/>
            <person name="Zeng A.P."/>
            <person name="Brandt B.W."/>
            <person name="Cornell M.J."/>
            <person name="van den Hondel C.A."/>
            <person name="Visser J."/>
            <person name="Oliver S.G."/>
            <person name="Turner G."/>
        </authorList>
    </citation>
    <scope>GENOME REANNOTATION</scope>
    <source>
        <strain>FGSC A4 / ATCC 38163 / CBS 112.46 / NRRL 194 / M139</strain>
    </source>
</reference>
<reference key="3">
    <citation type="journal article" date="1991" name="FEMS Microbiol. Lett.">
        <title>Adenylate kinase isoenzymes in Aspergillus nidulans.</title>
        <authorList>
            <person name="Hoang V.Q."/>
            <person name="Jaklitsch W."/>
            <person name="Scrutton M.C."/>
        </authorList>
    </citation>
    <scope>FUNCTION</scope>
    <scope>SUBCELLULAR LOCATION</scope>
</reference>
<name>KAD2_EMENI</name>
<gene>
    <name type="primary">adk1</name>
    <name type="ORF">AN5122</name>
</gene>